<keyword id="KW-0067">ATP-binding</keyword>
<keyword id="KW-0143">Chaperone</keyword>
<keyword id="KW-0963">Cytoplasm</keyword>
<keyword id="KW-0413">Isomerase</keyword>
<keyword id="KW-0547">Nucleotide-binding</keyword>
<name>CH602_RHILO</name>
<reference key="1">
    <citation type="journal article" date="2000" name="DNA Res.">
        <title>Complete genome structure of the nitrogen-fixing symbiotic bacterium Mesorhizobium loti.</title>
        <authorList>
            <person name="Kaneko T."/>
            <person name="Nakamura Y."/>
            <person name="Sato S."/>
            <person name="Asamizu E."/>
            <person name="Kato T."/>
            <person name="Sasamoto S."/>
            <person name="Watanabe A."/>
            <person name="Idesawa K."/>
            <person name="Ishikawa A."/>
            <person name="Kawashima K."/>
            <person name="Kimura T."/>
            <person name="Kishida Y."/>
            <person name="Kiyokawa C."/>
            <person name="Kohara M."/>
            <person name="Matsumoto M."/>
            <person name="Matsuno A."/>
            <person name="Mochizuki Y."/>
            <person name="Nakayama S."/>
            <person name="Nakazaki N."/>
            <person name="Shimpo S."/>
            <person name="Sugimoto M."/>
            <person name="Takeuchi C."/>
            <person name="Yamada M."/>
            <person name="Tabata S."/>
        </authorList>
    </citation>
    <scope>NUCLEOTIDE SEQUENCE [LARGE SCALE GENOMIC DNA]</scope>
    <source>
        <strain>LMG 29417 / CECT 9101 / MAFF 303099</strain>
    </source>
</reference>
<proteinExistence type="inferred from homology"/>
<feature type="chain" id="PRO_0000063495" description="Chaperonin GroEL 2">
    <location>
        <begin position="1"/>
        <end position="542"/>
    </location>
</feature>
<feature type="binding site" evidence="1">
    <location>
        <begin position="30"/>
        <end position="33"/>
    </location>
    <ligand>
        <name>ATP</name>
        <dbReference type="ChEBI" id="CHEBI:30616"/>
    </ligand>
</feature>
<feature type="binding site" evidence="1">
    <location>
        <position position="51"/>
    </location>
    <ligand>
        <name>ATP</name>
        <dbReference type="ChEBI" id="CHEBI:30616"/>
    </ligand>
</feature>
<feature type="binding site" evidence="1">
    <location>
        <begin position="87"/>
        <end position="91"/>
    </location>
    <ligand>
        <name>ATP</name>
        <dbReference type="ChEBI" id="CHEBI:30616"/>
    </ligand>
</feature>
<feature type="binding site" evidence="1">
    <location>
        <position position="415"/>
    </location>
    <ligand>
        <name>ATP</name>
        <dbReference type="ChEBI" id="CHEBI:30616"/>
    </ligand>
</feature>
<feature type="binding site" evidence="1">
    <location>
        <position position="496"/>
    </location>
    <ligand>
        <name>ATP</name>
        <dbReference type="ChEBI" id="CHEBI:30616"/>
    </ligand>
</feature>
<dbReference type="EC" id="5.6.1.7" evidence="1"/>
<dbReference type="EMBL" id="BA000012">
    <property type="protein sequence ID" value="BAB49537.1"/>
    <property type="molecule type" value="Genomic_DNA"/>
</dbReference>
<dbReference type="RefSeq" id="WP_010910889.1">
    <property type="nucleotide sequence ID" value="NC_002678.2"/>
</dbReference>
<dbReference type="SMR" id="Q98IH9"/>
<dbReference type="KEGG" id="mlo:mlr2394"/>
<dbReference type="PATRIC" id="fig|266835.9.peg.1926"/>
<dbReference type="eggNOG" id="COG0459">
    <property type="taxonomic scope" value="Bacteria"/>
</dbReference>
<dbReference type="HOGENOM" id="CLU_016503_3_0_5"/>
<dbReference type="Proteomes" id="UP000000552">
    <property type="component" value="Chromosome"/>
</dbReference>
<dbReference type="GO" id="GO:0005737">
    <property type="term" value="C:cytoplasm"/>
    <property type="evidence" value="ECO:0007669"/>
    <property type="project" value="UniProtKB-SubCell"/>
</dbReference>
<dbReference type="GO" id="GO:0005524">
    <property type="term" value="F:ATP binding"/>
    <property type="evidence" value="ECO:0007669"/>
    <property type="project" value="UniProtKB-UniRule"/>
</dbReference>
<dbReference type="GO" id="GO:0140662">
    <property type="term" value="F:ATP-dependent protein folding chaperone"/>
    <property type="evidence" value="ECO:0007669"/>
    <property type="project" value="InterPro"/>
</dbReference>
<dbReference type="GO" id="GO:0016853">
    <property type="term" value="F:isomerase activity"/>
    <property type="evidence" value="ECO:0007669"/>
    <property type="project" value="UniProtKB-KW"/>
</dbReference>
<dbReference type="GO" id="GO:0051082">
    <property type="term" value="F:unfolded protein binding"/>
    <property type="evidence" value="ECO:0007669"/>
    <property type="project" value="UniProtKB-UniRule"/>
</dbReference>
<dbReference type="GO" id="GO:0042026">
    <property type="term" value="P:protein refolding"/>
    <property type="evidence" value="ECO:0007669"/>
    <property type="project" value="UniProtKB-UniRule"/>
</dbReference>
<dbReference type="CDD" id="cd03344">
    <property type="entry name" value="GroEL"/>
    <property type="match status" value="1"/>
</dbReference>
<dbReference type="FunFam" id="1.10.560.10:FF:000001">
    <property type="entry name" value="60 kDa chaperonin"/>
    <property type="match status" value="1"/>
</dbReference>
<dbReference type="FunFam" id="3.50.7.10:FF:000001">
    <property type="entry name" value="60 kDa chaperonin"/>
    <property type="match status" value="1"/>
</dbReference>
<dbReference type="Gene3D" id="3.50.7.10">
    <property type="entry name" value="GroEL"/>
    <property type="match status" value="1"/>
</dbReference>
<dbReference type="Gene3D" id="1.10.560.10">
    <property type="entry name" value="GroEL-like equatorial domain"/>
    <property type="match status" value="1"/>
</dbReference>
<dbReference type="Gene3D" id="3.30.260.10">
    <property type="entry name" value="TCP-1-like chaperonin intermediate domain"/>
    <property type="match status" value="1"/>
</dbReference>
<dbReference type="HAMAP" id="MF_00600">
    <property type="entry name" value="CH60"/>
    <property type="match status" value="1"/>
</dbReference>
<dbReference type="InterPro" id="IPR018370">
    <property type="entry name" value="Chaperonin_Cpn60_CS"/>
</dbReference>
<dbReference type="InterPro" id="IPR001844">
    <property type="entry name" value="Cpn60/GroEL"/>
</dbReference>
<dbReference type="InterPro" id="IPR002423">
    <property type="entry name" value="Cpn60/GroEL/TCP-1"/>
</dbReference>
<dbReference type="InterPro" id="IPR027409">
    <property type="entry name" value="GroEL-like_apical_dom_sf"/>
</dbReference>
<dbReference type="InterPro" id="IPR027413">
    <property type="entry name" value="GROEL-like_equatorial_sf"/>
</dbReference>
<dbReference type="InterPro" id="IPR027410">
    <property type="entry name" value="TCP-1-like_intermed_sf"/>
</dbReference>
<dbReference type="NCBIfam" id="TIGR02348">
    <property type="entry name" value="GroEL"/>
    <property type="match status" value="1"/>
</dbReference>
<dbReference type="NCBIfam" id="NF000592">
    <property type="entry name" value="PRK00013.1"/>
    <property type="match status" value="1"/>
</dbReference>
<dbReference type="NCBIfam" id="NF009487">
    <property type="entry name" value="PRK12849.1"/>
    <property type="match status" value="1"/>
</dbReference>
<dbReference type="NCBIfam" id="NF009488">
    <property type="entry name" value="PRK12850.1"/>
    <property type="match status" value="1"/>
</dbReference>
<dbReference type="NCBIfam" id="NF009489">
    <property type="entry name" value="PRK12851.1"/>
    <property type="match status" value="1"/>
</dbReference>
<dbReference type="PANTHER" id="PTHR45633">
    <property type="entry name" value="60 KDA HEAT SHOCK PROTEIN, MITOCHONDRIAL"/>
    <property type="match status" value="1"/>
</dbReference>
<dbReference type="Pfam" id="PF00118">
    <property type="entry name" value="Cpn60_TCP1"/>
    <property type="match status" value="1"/>
</dbReference>
<dbReference type="PRINTS" id="PR00298">
    <property type="entry name" value="CHAPERONIN60"/>
</dbReference>
<dbReference type="SUPFAM" id="SSF52029">
    <property type="entry name" value="GroEL apical domain-like"/>
    <property type="match status" value="1"/>
</dbReference>
<dbReference type="SUPFAM" id="SSF48592">
    <property type="entry name" value="GroEL equatorial domain-like"/>
    <property type="match status" value="1"/>
</dbReference>
<dbReference type="SUPFAM" id="SSF54849">
    <property type="entry name" value="GroEL-intermediate domain like"/>
    <property type="match status" value="1"/>
</dbReference>
<dbReference type="PROSITE" id="PS00296">
    <property type="entry name" value="CHAPERONINS_CPN60"/>
    <property type="match status" value="1"/>
</dbReference>
<organism>
    <name type="scientific">Mesorhizobium japonicum (strain LMG 29417 / CECT 9101 / MAFF 303099)</name>
    <name type="common">Mesorhizobium loti (strain MAFF 303099)</name>
    <dbReference type="NCBI Taxonomy" id="266835"/>
    <lineage>
        <taxon>Bacteria</taxon>
        <taxon>Pseudomonadati</taxon>
        <taxon>Pseudomonadota</taxon>
        <taxon>Alphaproteobacteria</taxon>
        <taxon>Hyphomicrobiales</taxon>
        <taxon>Phyllobacteriaceae</taxon>
        <taxon>Mesorhizobium</taxon>
    </lineage>
</organism>
<accession>Q98IH9</accession>
<sequence>MAAKEVKFHSDAREKMLRGVNILADAVKVTLGPKGRNVVIDKSFGAPRITKDGVTVAKEIELEDKFENMGAQMVREVASKTSDLAGDGTTTATVLAQAIVKEGAKAVASGMNPMDLKRGIDKAVEAIVQELKTNARKVTRNDEIAQVGTISANGDAEIGRFLAEAMQKVGNEGVITVEEAKTAETELEVVEGMQFDRGYLSPYFITNQDKMRVELEEPYVLIHEKKLSNLQALLPVLEAVVQSSKPLLIIAEDVEGEALATLVVNKLRGGLKVAAVKAPGFGDRRKAMLEDIAILTGGTAISEDLGIKLENVTLEMLGRAKKVVIEKENTTIVDGAGSKDEIQGRVSQIKSQIEETTSDYDKEKLQERLAKLAGGVAVIRVGGSTEVEVKERKDRVDDAMHATRAAVEEGVLPGGGVALLRAAKALDSVQAENEDQKHGIEIVRRAIEAPVRQIAENAGAEGSIIVGKLREKPEFGWGWNAQTNAFGDLYNEGVIDPVKVVRTALQDAASVAGLLVTTEAMVAEKPKKEPAVPAMPAGGMDF</sequence>
<gene>
    <name evidence="1" type="primary">groEL2</name>
    <name evidence="1" type="synonym">groL2</name>
    <name type="ordered locus">mlr2394</name>
</gene>
<protein>
    <recommendedName>
        <fullName evidence="1">Chaperonin GroEL 2</fullName>
        <ecNumber evidence="1">5.6.1.7</ecNumber>
    </recommendedName>
    <alternativeName>
        <fullName evidence="1">60 kDa chaperonin 2</fullName>
    </alternativeName>
    <alternativeName>
        <fullName evidence="1">Chaperonin-60 2</fullName>
        <shortName evidence="1">Cpn60 2</shortName>
    </alternativeName>
</protein>
<comment type="function">
    <text evidence="1">Together with its co-chaperonin GroES, plays an essential role in assisting protein folding. The GroEL-GroES system forms a nano-cage that allows encapsulation of the non-native substrate proteins and provides a physical environment optimized to promote and accelerate protein folding.</text>
</comment>
<comment type="catalytic activity">
    <reaction evidence="1">
        <text>ATP + H2O + a folded polypeptide = ADP + phosphate + an unfolded polypeptide.</text>
        <dbReference type="EC" id="5.6.1.7"/>
    </reaction>
</comment>
<comment type="subunit">
    <text evidence="1">Forms a cylinder of 14 subunits composed of two heptameric rings stacked back-to-back. Interacts with the co-chaperonin GroES.</text>
</comment>
<comment type="subcellular location">
    <subcellularLocation>
        <location evidence="1">Cytoplasm</location>
    </subcellularLocation>
</comment>
<comment type="similarity">
    <text evidence="1">Belongs to the chaperonin (HSP60) family.</text>
</comment>
<evidence type="ECO:0000255" key="1">
    <source>
        <dbReference type="HAMAP-Rule" id="MF_00600"/>
    </source>
</evidence>